<proteinExistence type="inferred from homology"/>
<feature type="chain" id="PRO_0000333902" description="Cell division protein ZapB">
    <location>
        <begin position="1"/>
        <end position="81"/>
    </location>
</feature>
<feature type="region of interest" description="Disordered" evidence="2">
    <location>
        <begin position="36"/>
        <end position="67"/>
    </location>
</feature>
<feature type="coiled-coil region" evidence="1">
    <location>
        <begin position="5"/>
        <end position="81"/>
    </location>
</feature>
<feature type="compositionally biased region" description="Polar residues" evidence="2">
    <location>
        <begin position="37"/>
        <end position="47"/>
    </location>
</feature>
<feature type="compositionally biased region" description="Basic and acidic residues" evidence="2">
    <location>
        <begin position="48"/>
        <end position="62"/>
    </location>
</feature>
<feature type="modified residue" description="N6-acetyllysine" evidence="1">
    <location>
        <position position="10"/>
    </location>
</feature>
<comment type="function">
    <text evidence="1">Non-essential, abundant cell division factor that is required for proper Z-ring formation. It is recruited early to the divisome by direct interaction with FtsZ, stimulating Z-ring assembly and thereby promoting cell division earlier in the cell cycle. Its recruitment to the Z-ring requires functional FtsA or ZipA.</text>
</comment>
<comment type="subunit">
    <text evidence="1">Homodimer. The ends of the coiled-coil dimer bind to each other, forming polymers. Interacts with FtsZ.</text>
</comment>
<comment type="subcellular location">
    <subcellularLocation>
        <location>Cytoplasm</location>
    </subcellularLocation>
    <text evidence="1">Localizes to the septum at mid-cell, in a FtsZ-like pattern.</text>
</comment>
<comment type="similarity">
    <text evidence="1">Belongs to the ZapB family.</text>
</comment>
<comment type="sequence caution" evidence="3">
    <conflict type="erroneous initiation">
        <sequence resource="EMBL-CDS" id="ABV08338"/>
    </conflict>
</comment>
<sequence>MTMSLEVFEKLEAKVQQAIDTITLLQMEIEELKEKNNSLSQEVQNAQHQREELERENNHLKEQQNGWQERLQALLGRMEEV</sequence>
<accession>A8A734</accession>
<name>ZAPB_ECOHS</name>
<gene>
    <name evidence="1" type="primary">zapB</name>
    <name type="ordered locus">EcHS_A4160</name>
</gene>
<protein>
    <recommendedName>
        <fullName evidence="1">Cell division protein ZapB</fullName>
    </recommendedName>
</protein>
<dbReference type="EMBL" id="CP000802">
    <property type="protein sequence ID" value="ABV08338.1"/>
    <property type="status" value="ALT_INIT"/>
    <property type="molecule type" value="Genomic_DNA"/>
</dbReference>
<dbReference type="RefSeq" id="WP_001296623.1">
    <property type="nucleotide sequence ID" value="NC_009800.1"/>
</dbReference>
<dbReference type="SMR" id="A8A734"/>
<dbReference type="GeneID" id="93777970"/>
<dbReference type="KEGG" id="ecx:EcHS_A4160"/>
<dbReference type="HOGENOM" id="CLU_171174_2_0_6"/>
<dbReference type="GO" id="GO:0005737">
    <property type="term" value="C:cytoplasm"/>
    <property type="evidence" value="ECO:0007669"/>
    <property type="project" value="UniProtKB-SubCell"/>
</dbReference>
<dbReference type="GO" id="GO:0000917">
    <property type="term" value="P:division septum assembly"/>
    <property type="evidence" value="ECO:0007669"/>
    <property type="project" value="UniProtKB-KW"/>
</dbReference>
<dbReference type="GO" id="GO:0043093">
    <property type="term" value="P:FtsZ-dependent cytokinesis"/>
    <property type="evidence" value="ECO:0007669"/>
    <property type="project" value="UniProtKB-UniRule"/>
</dbReference>
<dbReference type="FunFam" id="1.20.5.340:FF:000014">
    <property type="entry name" value="Cell division protein ZapB"/>
    <property type="match status" value="1"/>
</dbReference>
<dbReference type="Gene3D" id="1.20.5.340">
    <property type="match status" value="1"/>
</dbReference>
<dbReference type="HAMAP" id="MF_01196">
    <property type="entry name" value="ZapB"/>
    <property type="match status" value="1"/>
</dbReference>
<dbReference type="InterPro" id="IPR009252">
    <property type="entry name" value="Cell_div_ZapB"/>
</dbReference>
<dbReference type="NCBIfam" id="NF011951">
    <property type="entry name" value="PRK15422.1"/>
    <property type="match status" value="1"/>
</dbReference>
<dbReference type="Pfam" id="PF06005">
    <property type="entry name" value="ZapB"/>
    <property type="match status" value="1"/>
</dbReference>
<keyword id="KW-0007">Acetylation</keyword>
<keyword id="KW-0131">Cell cycle</keyword>
<keyword id="KW-0132">Cell division</keyword>
<keyword id="KW-0175">Coiled coil</keyword>
<keyword id="KW-0963">Cytoplasm</keyword>
<keyword id="KW-0717">Septation</keyword>
<reference key="1">
    <citation type="journal article" date="2008" name="J. Bacteriol.">
        <title>The pangenome structure of Escherichia coli: comparative genomic analysis of E. coli commensal and pathogenic isolates.</title>
        <authorList>
            <person name="Rasko D.A."/>
            <person name="Rosovitz M.J."/>
            <person name="Myers G.S.A."/>
            <person name="Mongodin E.F."/>
            <person name="Fricke W.F."/>
            <person name="Gajer P."/>
            <person name="Crabtree J."/>
            <person name="Sebaihia M."/>
            <person name="Thomson N.R."/>
            <person name="Chaudhuri R."/>
            <person name="Henderson I.R."/>
            <person name="Sperandio V."/>
            <person name="Ravel J."/>
        </authorList>
    </citation>
    <scope>NUCLEOTIDE SEQUENCE [LARGE SCALE GENOMIC DNA]</scope>
    <source>
        <strain>HS</strain>
    </source>
</reference>
<evidence type="ECO:0000255" key="1">
    <source>
        <dbReference type="HAMAP-Rule" id="MF_01196"/>
    </source>
</evidence>
<evidence type="ECO:0000256" key="2">
    <source>
        <dbReference type="SAM" id="MobiDB-lite"/>
    </source>
</evidence>
<evidence type="ECO:0000305" key="3"/>
<organism>
    <name type="scientific">Escherichia coli O9:H4 (strain HS)</name>
    <dbReference type="NCBI Taxonomy" id="331112"/>
    <lineage>
        <taxon>Bacteria</taxon>
        <taxon>Pseudomonadati</taxon>
        <taxon>Pseudomonadota</taxon>
        <taxon>Gammaproteobacteria</taxon>
        <taxon>Enterobacterales</taxon>
        <taxon>Enterobacteriaceae</taxon>
        <taxon>Escherichia</taxon>
    </lineage>
</organism>